<comment type="function">
    <text evidence="1">Located on the platform of the 30S subunit, it bridges several disparate RNA helices of the 16S rRNA. Forms part of the Shine-Dalgarno cleft in the 70S ribosome.</text>
</comment>
<comment type="subunit">
    <text evidence="1">Part of the 30S ribosomal subunit. Interacts with proteins S7 and S18. Binds to IF-3.</text>
</comment>
<comment type="similarity">
    <text evidence="1">Belongs to the universal ribosomal protein uS11 family.</text>
</comment>
<name>RS11_BRASB</name>
<protein>
    <recommendedName>
        <fullName evidence="1">Small ribosomal subunit protein uS11</fullName>
    </recommendedName>
    <alternativeName>
        <fullName evidence="2">30S ribosomal protein S11</fullName>
    </alternativeName>
</protein>
<evidence type="ECO:0000255" key="1">
    <source>
        <dbReference type="HAMAP-Rule" id="MF_01310"/>
    </source>
</evidence>
<evidence type="ECO:0000305" key="2"/>
<accession>A5ELK4</accession>
<reference key="1">
    <citation type="journal article" date="2007" name="Science">
        <title>Legumes symbioses: absence of nod genes in photosynthetic bradyrhizobia.</title>
        <authorList>
            <person name="Giraud E."/>
            <person name="Moulin L."/>
            <person name="Vallenet D."/>
            <person name="Barbe V."/>
            <person name="Cytryn E."/>
            <person name="Avarre J.-C."/>
            <person name="Jaubert M."/>
            <person name="Simon D."/>
            <person name="Cartieaux F."/>
            <person name="Prin Y."/>
            <person name="Bena G."/>
            <person name="Hannibal L."/>
            <person name="Fardoux J."/>
            <person name="Kojadinovic M."/>
            <person name="Vuillet L."/>
            <person name="Lajus A."/>
            <person name="Cruveiller S."/>
            <person name="Rouy Z."/>
            <person name="Mangenot S."/>
            <person name="Segurens B."/>
            <person name="Dossat C."/>
            <person name="Franck W.L."/>
            <person name="Chang W.-S."/>
            <person name="Saunders E."/>
            <person name="Bruce D."/>
            <person name="Richardson P."/>
            <person name="Normand P."/>
            <person name="Dreyfus B."/>
            <person name="Pignol D."/>
            <person name="Stacey G."/>
            <person name="Emerich D."/>
            <person name="Vermeglio A."/>
            <person name="Medigue C."/>
            <person name="Sadowsky M."/>
        </authorList>
    </citation>
    <scope>NUCLEOTIDE SEQUENCE [LARGE SCALE GENOMIC DNA]</scope>
    <source>
        <strain>BTAi1 / ATCC BAA-1182</strain>
    </source>
</reference>
<gene>
    <name evidence="1" type="primary">rpsK</name>
    <name type="ordered locus">BBta_5047</name>
</gene>
<proteinExistence type="inferred from homology"/>
<feature type="chain" id="PRO_1000051822" description="Small ribosomal subunit protein uS11">
    <location>
        <begin position="1"/>
        <end position="129"/>
    </location>
</feature>
<dbReference type="EMBL" id="CP000494">
    <property type="protein sequence ID" value="ABQ37048.1"/>
    <property type="molecule type" value="Genomic_DNA"/>
</dbReference>
<dbReference type="RefSeq" id="WP_012045029.1">
    <property type="nucleotide sequence ID" value="NC_009485.1"/>
</dbReference>
<dbReference type="SMR" id="A5ELK4"/>
<dbReference type="STRING" id="288000.BBta_5047"/>
<dbReference type="KEGG" id="bbt:BBta_5047"/>
<dbReference type="eggNOG" id="COG0100">
    <property type="taxonomic scope" value="Bacteria"/>
</dbReference>
<dbReference type="HOGENOM" id="CLU_072439_5_0_5"/>
<dbReference type="OrthoDB" id="9806415at2"/>
<dbReference type="Proteomes" id="UP000000246">
    <property type="component" value="Chromosome"/>
</dbReference>
<dbReference type="GO" id="GO:1990904">
    <property type="term" value="C:ribonucleoprotein complex"/>
    <property type="evidence" value="ECO:0007669"/>
    <property type="project" value="UniProtKB-KW"/>
</dbReference>
<dbReference type="GO" id="GO:0005840">
    <property type="term" value="C:ribosome"/>
    <property type="evidence" value="ECO:0007669"/>
    <property type="project" value="UniProtKB-KW"/>
</dbReference>
<dbReference type="GO" id="GO:0019843">
    <property type="term" value="F:rRNA binding"/>
    <property type="evidence" value="ECO:0007669"/>
    <property type="project" value="UniProtKB-UniRule"/>
</dbReference>
<dbReference type="GO" id="GO:0003735">
    <property type="term" value="F:structural constituent of ribosome"/>
    <property type="evidence" value="ECO:0007669"/>
    <property type="project" value="InterPro"/>
</dbReference>
<dbReference type="GO" id="GO:0006412">
    <property type="term" value="P:translation"/>
    <property type="evidence" value="ECO:0007669"/>
    <property type="project" value="UniProtKB-UniRule"/>
</dbReference>
<dbReference type="FunFam" id="3.30.420.80:FF:000001">
    <property type="entry name" value="30S ribosomal protein S11"/>
    <property type="match status" value="1"/>
</dbReference>
<dbReference type="Gene3D" id="3.30.420.80">
    <property type="entry name" value="Ribosomal protein S11"/>
    <property type="match status" value="1"/>
</dbReference>
<dbReference type="HAMAP" id="MF_01310">
    <property type="entry name" value="Ribosomal_uS11"/>
    <property type="match status" value="1"/>
</dbReference>
<dbReference type="InterPro" id="IPR001971">
    <property type="entry name" value="Ribosomal_uS11"/>
</dbReference>
<dbReference type="InterPro" id="IPR019981">
    <property type="entry name" value="Ribosomal_uS11_bac-type"/>
</dbReference>
<dbReference type="InterPro" id="IPR036967">
    <property type="entry name" value="Ribosomal_uS11_sf"/>
</dbReference>
<dbReference type="NCBIfam" id="NF003698">
    <property type="entry name" value="PRK05309.1"/>
    <property type="match status" value="1"/>
</dbReference>
<dbReference type="NCBIfam" id="TIGR03632">
    <property type="entry name" value="uS11_bact"/>
    <property type="match status" value="1"/>
</dbReference>
<dbReference type="PANTHER" id="PTHR11759">
    <property type="entry name" value="40S RIBOSOMAL PROTEIN S14/30S RIBOSOMAL PROTEIN S11"/>
    <property type="match status" value="1"/>
</dbReference>
<dbReference type="Pfam" id="PF00411">
    <property type="entry name" value="Ribosomal_S11"/>
    <property type="match status" value="1"/>
</dbReference>
<dbReference type="PIRSF" id="PIRSF002131">
    <property type="entry name" value="Ribosomal_S11"/>
    <property type="match status" value="1"/>
</dbReference>
<dbReference type="SUPFAM" id="SSF53137">
    <property type="entry name" value="Translational machinery components"/>
    <property type="match status" value="1"/>
</dbReference>
<keyword id="KW-1185">Reference proteome</keyword>
<keyword id="KW-0687">Ribonucleoprotein</keyword>
<keyword id="KW-0689">Ribosomal protein</keyword>
<keyword id="KW-0694">RNA-binding</keyword>
<keyword id="KW-0699">rRNA-binding</keyword>
<sequence>MAKEATRVRRRERKNIASGVAHVNSSFNNTTITITDAQGNTIAWSSAGTMGFKGSRKSTPYAAQVAAEDVSKKAQEHGMRTLEVEVAGPGSGRESALRALQAAGFTVTSIRDVTTIPHNGCRPRKRRRV</sequence>
<organism>
    <name type="scientific">Bradyrhizobium sp. (strain BTAi1 / ATCC BAA-1182)</name>
    <dbReference type="NCBI Taxonomy" id="288000"/>
    <lineage>
        <taxon>Bacteria</taxon>
        <taxon>Pseudomonadati</taxon>
        <taxon>Pseudomonadota</taxon>
        <taxon>Alphaproteobacteria</taxon>
        <taxon>Hyphomicrobiales</taxon>
        <taxon>Nitrobacteraceae</taxon>
        <taxon>Bradyrhizobium</taxon>
    </lineage>
</organism>